<sequence>MLNMKEQYTKEVVPALQKEFGYKNVMQVPRIEKITLNMGVGEAVGDKKLIENAVADLERLAGQKVVVTKARKSVAGFKIREGWPIGCKVTLRGERMWDFFDRLVHIAVPRIRDFRGLNPKSFDGRGNYSMGVREQIIFPEIEYDKVDKIRGLDITITTTAGTDDEGRELLKAFGFPFKK</sequence>
<feature type="chain" id="PRO_1000052765" description="Large ribosomal subunit protein uL5">
    <location>
        <begin position="1"/>
        <end position="179"/>
    </location>
</feature>
<accession>A1TYK9</accession>
<keyword id="KW-0687">Ribonucleoprotein</keyword>
<keyword id="KW-0689">Ribosomal protein</keyword>
<keyword id="KW-0694">RNA-binding</keyword>
<keyword id="KW-0699">rRNA-binding</keyword>
<keyword id="KW-0820">tRNA-binding</keyword>
<reference key="1">
    <citation type="journal article" date="2011" name="Appl. Environ. Microbiol.">
        <title>Genomic potential of Marinobacter aquaeolei, a biogeochemical 'opportunitroph'.</title>
        <authorList>
            <person name="Singer E."/>
            <person name="Webb E.A."/>
            <person name="Nelson W.C."/>
            <person name="Heidelberg J.F."/>
            <person name="Ivanova N."/>
            <person name="Pati A."/>
            <person name="Edwards K.J."/>
        </authorList>
    </citation>
    <scope>NUCLEOTIDE SEQUENCE [LARGE SCALE GENOMIC DNA]</scope>
    <source>
        <strain>ATCC 700491 / DSM 11845 / VT8</strain>
    </source>
</reference>
<gene>
    <name evidence="1" type="primary">rplE</name>
    <name type="ordered locus">Maqu_0731</name>
</gene>
<proteinExistence type="inferred from homology"/>
<name>RL5_MARN8</name>
<organism>
    <name type="scientific">Marinobacter nauticus (strain ATCC 700491 / DSM 11845 / VT8)</name>
    <name type="common">Marinobacter aquaeolei</name>
    <dbReference type="NCBI Taxonomy" id="351348"/>
    <lineage>
        <taxon>Bacteria</taxon>
        <taxon>Pseudomonadati</taxon>
        <taxon>Pseudomonadota</taxon>
        <taxon>Gammaproteobacteria</taxon>
        <taxon>Pseudomonadales</taxon>
        <taxon>Marinobacteraceae</taxon>
        <taxon>Marinobacter</taxon>
    </lineage>
</organism>
<evidence type="ECO:0000255" key="1">
    <source>
        <dbReference type="HAMAP-Rule" id="MF_01333"/>
    </source>
</evidence>
<evidence type="ECO:0000305" key="2"/>
<dbReference type="EMBL" id="CP000514">
    <property type="protein sequence ID" value="ABM17828.1"/>
    <property type="molecule type" value="Genomic_DNA"/>
</dbReference>
<dbReference type="RefSeq" id="WP_011784254.1">
    <property type="nucleotide sequence ID" value="NC_008740.1"/>
</dbReference>
<dbReference type="SMR" id="A1TYK9"/>
<dbReference type="STRING" id="351348.Maqu_0731"/>
<dbReference type="GeneID" id="31820106"/>
<dbReference type="KEGG" id="maq:Maqu_0731"/>
<dbReference type="eggNOG" id="COG0094">
    <property type="taxonomic scope" value="Bacteria"/>
</dbReference>
<dbReference type="HOGENOM" id="CLU_061015_2_1_6"/>
<dbReference type="OrthoDB" id="9806626at2"/>
<dbReference type="Proteomes" id="UP000000998">
    <property type="component" value="Chromosome"/>
</dbReference>
<dbReference type="GO" id="GO:1990904">
    <property type="term" value="C:ribonucleoprotein complex"/>
    <property type="evidence" value="ECO:0007669"/>
    <property type="project" value="UniProtKB-KW"/>
</dbReference>
<dbReference type="GO" id="GO:0005840">
    <property type="term" value="C:ribosome"/>
    <property type="evidence" value="ECO:0007669"/>
    <property type="project" value="UniProtKB-KW"/>
</dbReference>
<dbReference type="GO" id="GO:0019843">
    <property type="term" value="F:rRNA binding"/>
    <property type="evidence" value="ECO:0007669"/>
    <property type="project" value="UniProtKB-UniRule"/>
</dbReference>
<dbReference type="GO" id="GO:0003735">
    <property type="term" value="F:structural constituent of ribosome"/>
    <property type="evidence" value="ECO:0007669"/>
    <property type="project" value="InterPro"/>
</dbReference>
<dbReference type="GO" id="GO:0000049">
    <property type="term" value="F:tRNA binding"/>
    <property type="evidence" value="ECO:0007669"/>
    <property type="project" value="UniProtKB-UniRule"/>
</dbReference>
<dbReference type="GO" id="GO:0006412">
    <property type="term" value="P:translation"/>
    <property type="evidence" value="ECO:0007669"/>
    <property type="project" value="UniProtKB-UniRule"/>
</dbReference>
<dbReference type="FunFam" id="3.30.1440.10:FF:000001">
    <property type="entry name" value="50S ribosomal protein L5"/>
    <property type="match status" value="1"/>
</dbReference>
<dbReference type="Gene3D" id="3.30.1440.10">
    <property type="match status" value="1"/>
</dbReference>
<dbReference type="HAMAP" id="MF_01333_B">
    <property type="entry name" value="Ribosomal_uL5_B"/>
    <property type="match status" value="1"/>
</dbReference>
<dbReference type="InterPro" id="IPR002132">
    <property type="entry name" value="Ribosomal_uL5"/>
</dbReference>
<dbReference type="InterPro" id="IPR020930">
    <property type="entry name" value="Ribosomal_uL5_bac-type"/>
</dbReference>
<dbReference type="InterPro" id="IPR031309">
    <property type="entry name" value="Ribosomal_uL5_C"/>
</dbReference>
<dbReference type="InterPro" id="IPR020929">
    <property type="entry name" value="Ribosomal_uL5_CS"/>
</dbReference>
<dbReference type="InterPro" id="IPR022803">
    <property type="entry name" value="Ribosomal_uL5_dom_sf"/>
</dbReference>
<dbReference type="InterPro" id="IPR031310">
    <property type="entry name" value="Ribosomal_uL5_N"/>
</dbReference>
<dbReference type="NCBIfam" id="NF000585">
    <property type="entry name" value="PRK00010.1"/>
    <property type="match status" value="1"/>
</dbReference>
<dbReference type="PANTHER" id="PTHR11994">
    <property type="entry name" value="60S RIBOSOMAL PROTEIN L11-RELATED"/>
    <property type="match status" value="1"/>
</dbReference>
<dbReference type="Pfam" id="PF00281">
    <property type="entry name" value="Ribosomal_L5"/>
    <property type="match status" value="1"/>
</dbReference>
<dbReference type="Pfam" id="PF00673">
    <property type="entry name" value="Ribosomal_L5_C"/>
    <property type="match status" value="1"/>
</dbReference>
<dbReference type="PIRSF" id="PIRSF002161">
    <property type="entry name" value="Ribosomal_L5"/>
    <property type="match status" value="1"/>
</dbReference>
<dbReference type="SUPFAM" id="SSF55282">
    <property type="entry name" value="RL5-like"/>
    <property type="match status" value="1"/>
</dbReference>
<dbReference type="PROSITE" id="PS00358">
    <property type="entry name" value="RIBOSOMAL_L5"/>
    <property type="match status" value="1"/>
</dbReference>
<comment type="function">
    <text evidence="1">This is one of the proteins that bind and probably mediate the attachment of the 5S RNA into the large ribosomal subunit, where it forms part of the central protuberance. In the 70S ribosome it contacts protein S13 of the 30S subunit (bridge B1b), connecting the 2 subunits; this bridge is implicated in subunit movement. Contacts the P site tRNA; the 5S rRNA and some of its associated proteins might help stabilize positioning of ribosome-bound tRNAs.</text>
</comment>
<comment type="subunit">
    <text evidence="1">Part of the 50S ribosomal subunit; part of the 5S rRNA/L5/L18/L25 subcomplex. Contacts the 5S rRNA and the P site tRNA. Forms a bridge to the 30S subunit in the 70S ribosome.</text>
</comment>
<comment type="similarity">
    <text evidence="1">Belongs to the universal ribosomal protein uL5 family.</text>
</comment>
<protein>
    <recommendedName>
        <fullName evidence="1">Large ribosomal subunit protein uL5</fullName>
    </recommendedName>
    <alternativeName>
        <fullName evidence="2">50S ribosomal protein L5</fullName>
    </alternativeName>
</protein>